<evidence type="ECO:0000250" key="1">
    <source>
        <dbReference type="UniProtKB" id="P69791"/>
    </source>
</evidence>
<evidence type="ECO:0000255" key="2">
    <source>
        <dbReference type="PROSITE-ProRule" id="PRU00418"/>
    </source>
</evidence>
<evidence type="ECO:0000305" key="3"/>
<feature type="chain" id="PRO_0000186496" description="PTS system N,N'-diacetylchitobiose-specific EIIA component">
    <location>
        <begin position="1"/>
        <end position="116"/>
    </location>
</feature>
<feature type="domain" description="PTS EIIA type-3" evidence="2">
    <location>
        <begin position="15"/>
        <end position="113"/>
    </location>
</feature>
<feature type="active site" description="Tele-phosphohistidine intermediate" evidence="1">
    <location>
        <position position="89"/>
    </location>
</feature>
<feature type="modified residue" description="Phosphohistidine; by HPr" evidence="2">
    <location>
        <position position="89"/>
    </location>
</feature>
<reference key="1">
    <citation type="journal article" date="2001" name="Nature">
        <title>Genome sequence of enterohaemorrhagic Escherichia coli O157:H7.</title>
        <authorList>
            <person name="Perna N.T."/>
            <person name="Plunkett G. III"/>
            <person name="Burland V."/>
            <person name="Mau B."/>
            <person name="Glasner J.D."/>
            <person name="Rose D.J."/>
            <person name="Mayhew G.F."/>
            <person name="Evans P.S."/>
            <person name="Gregor J."/>
            <person name="Kirkpatrick H.A."/>
            <person name="Posfai G."/>
            <person name="Hackett J."/>
            <person name="Klink S."/>
            <person name="Boutin A."/>
            <person name="Shao Y."/>
            <person name="Miller L."/>
            <person name="Grotbeck E.J."/>
            <person name="Davis N.W."/>
            <person name="Lim A."/>
            <person name="Dimalanta E.T."/>
            <person name="Potamousis K."/>
            <person name="Apodaca J."/>
            <person name="Anantharaman T.S."/>
            <person name="Lin J."/>
            <person name="Yen G."/>
            <person name="Schwartz D.C."/>
            <person name="Welch R.A."/>
            <person name="Blattner F.R."/>
        </authorList>
    </citation>
    <scope>NUCLEOTIDE SEQUENCE [LARGE SCALE GENOMIC DNA]</scope>
    <source>
        <strain>O157:H7 / EDL933 / ATCC 700927 / EHEC</strain>
    </source>
</reference>
<reference key="2">
    <citation type="journal article" date="2001" name="DNA Res.">
        <title>Complete genome sequence of enterohemorrhagic Escherichia coli O157:H7 and genomic comparison with a laboratory strain K-12.</title>
        <authorList>
            <person name="Hayashi T."/>
            <person name="Makino K."/>
            <person name="Ohnishi M."/>
            <person name="Kurokawa K."/>
            <person name="Ishii K."/>
            <person name="Yokoyama K."/>
            <person name="Han C.-G."/>
            <person name="Ohtsubo E."/>
            <person name="Nakayama K."/>
            <person name="Murata T."/>
            <person name="Tanaka M."/>
            <person name="Tobe T."/>
            <person name="Iida T."/>
            <person name="Takami H."/>
            <person name="Honda T."/>
            <person name="Sasakawa C."/>
            <person name="Ogasawara N."/>
            <person name="Yasunaga T."/>
            <person name="Kuhara S."/>
            <person name="Shiba T."/>
            <person name="Hattori M."/>
            <person name="Shinagawa H."/>
        </authorList>
    </citation>
    <scope>NUCLEOTIDE SEQUENCE [LARGE SCALE GENOMIC DNA]</scope>
    <source>
        <strain>O157:H7 / Sakai / RIMD 0509952 / EHEC</strain>
    </source>
</reference>
<protein>
    <recommendedName>
        <fullName evidence="1">PTS system N,N'-diacetylchitobiose-specific EIIA component</fullName>
    </recommendedName>
    <alternativeName>
        <fullName evidence="1">EIIA-Chb</fullName>
    </alternativeName>
    <alternativeName>
        <fullName evidence="1">EIII-Chb</fullName>
    </alternativeName>
    <alternativeName>
        <fullName evidence="1">IIIcel</fullName>
    </alternativeName>
    <alternativeName>
        <fullName evidence="1">N,N'-diacetylchitobiose-specific phosphotransferase enzyme IIA component</fullName>
    </alternativeName>
</protein>
<keyword id="KW-0963">Cytoplasm</keyword>
<keyword id="KW-0597">Phosphoprotein</keyword>
<keyword id="KW-0598">Phosphotransferase system</keyword>
<keyword id="KW-1185">Reference proteome</keyword>
<keyword id="KW-0762">Sugar transport</keyword>
<keyword id="KW-0808">Transferase</keyword>
<keyword id="KW-0813">Transport</keyword>
<name>PTQA_ECO57</name>
<comment type="function">
    <text evidence="1">The phosphoenolpyruvate-dependent sugar phosphotransferase system (sugar PTS), a major carbohydrate active transport system, catalyzes the phosphorylation of incoming sugar substrates concomitantly with their translocation across the cell membrane. The enzyme II ChbABC PTS system is involved in the transport of the chitin disaccharide N,N'-diacetylchitobiose (GlcNAc2).</text>
</comment>
<comment type="cofactor">
    <cofactor evidence="1">
        <name>Mg(2+)</name>
        <dbReference type="ChEBI" id="CHEBI:18420"/>
    </cofactor>
    <text evidence="1">Can also use copper and nickel with lower efficiency.</text>
</comment>
<comment type="subunit">
    <text evidence="1">Forms a complex with ChbB (EIIB). ChbA is a homotrimer.</text>
</comment>
<comment type="subcellular location">
    <subcellularLocation>
        <location evidence="3">Cytoplasm</location>
    </subcellularLocation>
</comment>
<comment type="induction">
    <text evidence="1">By GlcNAc2, GlcNAc3 and beta-N,N'-diacetylchitobiose (Me-TCB).</text>
</comment>
<comment type="domain">
    <text evidence="2">The PTS EIIA type-3 domain is phosphorylated by phospho-HPr on a histidyl residue. Then, it transfers the phosphoryl group to the PTS EIIB type-3 domain.</text>
</comment>
<sequence>MMDLDNIPDTQTEAEELEEVVMGLIINSGQARSLAYAALKQAKQGDFAAAKAMMDQSRMALNEAHLVQTKLIEGDAGEGKMKVSLVLVHAQDHLMTSMLARELITELIELHEKLKA</sequence>
<accession>P69793</accession>
<accession>P17335</accession>
<accession>Q47092</accession>
<accession>Q47093</accession>
<accession>Q47094</accession>
<accession>Q57128</accession>
<proteinExistence type="inferred from homology"/>
<organism>
    <name type="scientific">Escherichia coli O157:H7</name>
    <dbReference type="NCBI Taxonomy" id="83334"/>
    <lineage>
        <taxon>Bacteria</taxon>
        <taxon>Pseudomonadati</taxon>
        <taxon>Pseudomonadota</taxon>
        <taxon>Gammaproteobacteria</taxon>
        <taxon>Enterobacterales</taxon>
        <taxon>Enterobacteriaceae</taxon>
        <taxon>Escherichia</taxon>
    </lineage>
</organism>
<dbReference type="EMBL" id="AE005174">
    <property type="protein sequence ID" value="AAG56722.1"/>
    <property type="molecule type" value="Genomic_DNA"/>
</dbReference>
<dbReference type="EMBL" id="BA000007">
    <property type="protein sequence ID" value="BAB35865.1"/>
    <property type="molecule type" value="Genomic_DNA"/>
</dbReference>
<dbReference type="PIR" id="B90934">
    <property type="entry name" value="B90934"/>
</dbReference>
<dbReference type="PIR" id="F85782">
    <property type="entry name" value="F85782"/>
</dbReference>
<dbReference type="RefSeq" id="NP_310469.1">
    <property type="nucleotide sequence ID" value="NC_002695.1"/>
</dbReference>
<dbReference type="RefSeq" id="WP_000968919.1">
    <property type="nucleotide sequence ID" value="NZ_VOAI01000007.1"/>
</dbReference>
<dbReference type="BMRB" id="P69793"/>
<dbReference type="SMR" id="P69793"/>
<dbReference type="STRING" id="155864.Z2766"/>
<dbReference type="GeneID" id="916949"/>
<dbReference type="GeneID" id="93775949"/>
<dbReference type="KEGG" id="ece:Z2766"/>
<dbReference type="KEGG" id="ecs:ECs_2442"/>
<dbReference type="PATRIC" id="fig|386585.9.peg.2556"/>
<dbReference type="eggNOG" id="COG1447">
    <property type="taxonomic scope" value="Bacteria"/>
</dbReference>
<dbReference type="HOGENOM" id="CLU_152490_3_0_6"/>
<dbReference type="OMA" id="MEQSRMA"/>
<dbReference type="Proteomes" id="UP000000558">
    <property type="component" value="Chromosome"/>
</dbReference>
<dbReference type="Proteomes" id="UP000002519">
    <property type="component" value="Chromosome"/>
</dbReference>
<dbReference type="GO" id="GO:0005737">
    <property type="term" value="C:cytoplasm"/>
    <property type="evidence" value="ECO:0007669"/>
    <property type="project" value="UniProtKB-SubCell"/>
</dbReference>
<dbReference type="GO" id="GO:0016740">
    <property type="term" value="F:transferase activity"/>
    <property type="evidence" value="ECO:0007669"/>
    <property type="project" value="UniProtKB-KW"/>
</dbReference>
<dbReference type="GO" id="GO:0009401">
    <property type="term" value="P:phosphoenolpyruvate-dependent sugar phosphotransferase system"/>
    <property type="evidence" value="ECO:0007669"/>
    <property type="project" value="UniProtKB-KW"/>
</dbReference>
<dbReference type="CDD" id="cd00215">
    <property type="entry name" value="PTS_IIA_lac"/>
    <property type="match status" value="1"/>
</dbReference>
<dbReference type="FunFam" id="1.20.58.80:FF:000001">
    <property type="entry name" value="PTS system, lactose-specific IIa component"/>
    <property type="match status" value="1"/>
</dbReference>
<dbReference type="Gene3D" id="1.20.58.80">
    <property type="entry name" value="Phosphotransferase system, lactose/cellobiose-type IIA subunit"/>
    <property type="match status" value="1"/>
</dbReference>
<dbReference type="InterPro" id="IPR003188">
    <property type="entry name" value="PTS_IIA_lac/cel"/>
</dbReference>
<dbReference type="InterPro" id="IPR036542">
    <property type="entry name" value="PTS_IIA_lac/cel_sf"/>
</dbReference>
<dbReference type="NCBIfam" id="TIGR00823">
    <property type="entry name" value="EIIA-LAC"/>
    <property type="match status" value="1"/>
</dbReference>
<dbReference type="NCBIfam" id="NF007768">
    <property type="entry name" value="PRK10454.1"/>
    <property type="match status" value="1"/>
</dbReference>
<dbReference type="PANTHER" id="PTHR34382">
    <property type="entry name" value="PTS SYSTEM N,N'-DIACETYLCHITOBIOSE-SPECIFIC EIIA COMPONENT"/>
    <property type="match status" value="1"/>
</dbReference>
<dbReference type="PANTHER" id="PTHR34382:SF7">
    <property type="entry name" value="PTS SYSTEM N,N'-DIACETYLCHITOBIOSE-SPECIFIC EIIA COMPONENT"/>
    <property type="match status" value="1"/>
</dbReference>
<dbReference type="Pfam" id="PF02255">
    <property type="entry name" value="PTS_IIA"/>
    <property type="match status" value="1"/>
</dbReference>
<dbReference type="PIRSF" id="PIRSF000699">
    <property type="entry name" value="PTS_IILac_III"/>
    <property type="match status" value="1"/>
</dbReference>
<dbReference type="SUPFAM" id="SSF46973">
    <property type="entry name" value="Enzyme IIa from lactose specific PTS, IIa-lac"/>
    <property type="match status" value="1"/>
</dbReference>
<dbReference type="PROSITE" id="PS51095">
    <property type="entry name" value="PTS_EIIA_TYPE_3"/>
    <property type="match status" value="1"/>
</dbReference>
<gene>
    <name type="primary">chbA</name>
    <name type="synonym">celC</name>
    <name type="ordered locus">Z2766</name>
    <name type="ordered locus">ECs2442</name>
</gene>